<feature type="chain" id="PRO_0000326826" description="Acylphosphatase">
    <location>
        <begin position="1"/>
        <end position="117"/>
    </location>
</feature>
<feature type="domain" description="Acylphosphatase-like" evidence="1">
    <location>
        <begin position="21"/>
        <end position="107"/>
    </location>
</feature>
<feature type="active site" evidence="1">
    <location>
        <position position="36"/>
    </location>
</feature>
<feature type="active site" evidence="1">
    <location>
        <position position="54"/>
    </location>
</feature>
<accession>A5GS00</accession>
<dbReference type="EC" id="3.6.1.7"/>
<dbReference type="EMBL" id="CT978603">
    <property type="protein sequence ID" value="CAK27659.1"/>
    <property type="molecule type" value="Genomic_DNA"/>
</dbReference>
<dbReference type="SMR" id="A5GS00"/>
<dbReference type="STRING" id="316278.SynRCC307_0756"/>
<dbReference type="KEGG" id="syr:SynRCC307_0756"/>
<dbReference type="eggNOG" id="COG1254">
    <property type="taxonomic scope" value="Bacteria"/>
</dbReference>
<dbReference type="HOGENOM" id="CLU_141932_1_0_3"/>
<dbReference type="OrthoDB" id="9808093at2"/>
<dbReference type="Proteomes" id="UP000001115">
    <property type="component" value="Chromosome"/>
</dbReference>
<dbReference type="GO" id="GO:0003998">
    <property type="term" value="F:acylphosphatase activity"/>
    <property type="evidence" value="ECO:0007669"/>
    <property type="project" value="UniProtKB-EC"/>
</dbReference>
<dbReference type="Gene3D" id="3.30.70.100">
    <property type="match status" value="1"/>
</dbReference>
<dbReference type="InterPro" id="IPR020456">
    <property type="entry name" value="Acylphosphatase"/>
</dbReference>
<dbReference type="InterPro" id="IPR001792">
    <property type="entry name" value="Acylphosphatase-like_dom"/>
</dbReference>
<dbReference type="InterPro" id="IPR036046">
    <property type="entry name" value="Acylphosphatase-like_dom_sf"/>
</dbReference>
<dbReference type="InterPro" id="IPR017968">
    <property type="entry name" value="Acylphosphatase_CS"/>
</dbReference>
<dbReference type="NCBIfam" id="NF011023">
    <property type="entry name" value="PRK14452.1"/>
    <property type="match status" value="1"/>
</dbReference>
<dbReference type="PANTHER" id="PTHR47268">
    <property type="entry name" value="ACYLPHOSPHATASE"/>
    <property type="match status" value="1"/>
</dbReference>
<dbReference type="PANTHER" id="PTHR47268:SF4">
    <property type="entry name" value="ACYLPHOSPHATASE"/>
    <property type="match status" value="1"/>
</dbReference>
<dbReference type="Pfam" id="PF00708">
    <property type="entry name" value="Acylphosphatase"/>
    <property type="match status" value="1"/>
</dbReference>
<dbReference type="PRINTS" id="PR00112">
    <property type="entry name" value="ACYLPHPHTASE"/>
</dbReference>
<dbReference type="SUPFAM" id="SSF54975">
    <property type="entry name" value="Acylphosphatase/BLUF domain-like"/>
    <property type="match status" value="1"/>
</dbReference>
<dbReference type="PROSITE" id="PS00151">
    <property type="entry name" value="ACYLPHOSPHATASE_2"/>
    <property type="match status" value="1"/>
</dbReference>
<dbReference type="PROSITE" id="PS51160">
    <property type="entry name" value="ACYLPHOSPHATASE_3"/>
    <property type="match status" value="1"/>
</dbReference>
<name>ACYP_SYNR3</name>
<organism>
    <name type="scientific">Synechococcus sp. (strain RCC307)</name>
    <dbReference type="NCBI Taxonomy" id="316278"/>
    <lineage>
        <taxon>Bacteria</taxon>
        <taxon>Bacillati</taxon>
        <taxon>Cyanobacteriota</taxon>
        <taxon>Cyanophyceae</taxon>
        <taxon>Synechococcales</taxon>
        <taxon>Synechococcaceae</taxon>
        <taxon>Synechococcus</taxon>
    </lineage>
</organism>
<proteinExistence type="inferred from homology"/>
<evidence type="ECO:0000255" key="1">
    <source>
        <dbReference type="PROSITE-ProRule" id="PRU00520"/>
    </source>
</evidence>
<evidence type="ECO:0000305" key="2"/>
<gene>
    <name type="primary">acyP</name>
    <name type="ordered locus">SynRCC307_0756</name>
</gene>
<comment type="catalytic activity">
    <reaction>
        <text>an acyl phosphate + H2O = a carboxylate + phosphate + H(+)</text>
        <dbReference type="Rhea" id="RHEA:14965"/>
        <dbReference type="ChEBI" id="CHEBI:15377"/>
        <dbReference type="ChEBI" id="CHEBI:15378"/>
        <dbReference type="ChEBI" id="CHEBI:29067"/>
        <dbReference type="ChEBI" id="CHEBI:43474"/>
        <dbReference type="ChEBI" id="CHEBI:59918"/>
        <dbReference type="EC" id="3.6.1.7"/>
    </reaction>
</comment>
<comment type="similarity">
    <text evidence="2">Belongs to the acylphosphatase family.</text>
</comment>
<sequence>MAKRLERDGQPNRSLRIPAERWRFRIRGLVQGVGYRAGCCRRAQELGLAGWVRNCSDGSVEVQAEGDEQRLTELRVWCEGGPPGARVDSVDGSRVATTGADWFEIRPNHFQGGALTR</sequence>
<protein>
    <recommendedName>
        <fullName>Acylphosphatase</fullName>
        <ecNumber>3.6.1.7</ecNumber>
    </recommendedName>
    <alternativeName>
        <fullName>Acylphosphate phosphohydrolase</fullName>
    </alternativeName>
</protein>
<keyword id="KW-0378">Hydrolase</keyword>
<keyword id="KW-1185">Reference proteome</keyword>
<reference key="1">
    <citation type="submission" date="2006-05" db="EMBL/GenBank/DDBJ databases">
        <authorList>
            <consortium name="Genoscope"/>
        </authorList>
    </citation>
    <scope>NUCLEOTIDE SEQUENCE [LARGE SCALE GENOMIC DNA]</scope>
    <source>
        <strain>RCC307</strain>
    </source>
</reference>